<name>COAX_ANAD2</name>
<organism>
    <name type="scientific">Anaeromyxobacter dehalogenans (strain 2CP-1 / ATCC BAA-258)</name>
    <dbReference type="NCBI Taxonomy" id="455488"/>
    <lineage>
        <taxon>Bacteria</taxon>
        <taxon>Pseudomonadati</taxon>
        <taxon>Myxococcota</taxon>
        <taxon>Myxococcia</taxon>
        <taxon>Myxococcales</taxon>
        <taxon>Cystobacterineae</taxon>
        <taxon>Anaeromyxobacteraceae</taxon>
        <taxon>Anaeromyxobacter</taxon>
    </lineage>
</organism>
<sequence>MLLAIDVGNTNTTLGVYDGAVLRRHWRVETSHTRTYDEYGILLRQLFASAGLEPARVSAVVIASVVPPLAFTLEQMCVRYFDRKPMFVGPGMKTGMPILYENPREVGADRVVNAVAAYERWRCALVVVDFGTATTFDVISAKGEYLGGAICPGIGISMDALARSASKLPRVEFAKPPSVVGKNTVASIQAGLVYGYVGMVDGICAQIAAELATPPKVVATGGLAPLIAGVSRSITEVDEHLTLEGLRILHERNR</sequence>
<dbReference type="EC" id="2.7.1.33" evidence="1"/>
<dbReference type="EMBL" id="CP001359">
    <property type="protein sequence ID" value="ACL64916.1"/>
    <property type="molecule type" value="Genomic_DNA"/>
</dbReference>
<dbReference type="RefSeq" id="WP_012525528.1">
    <property type="nucleotide sequence ID" value="NC_011891.1"/>
</dbReference>
<dbReference type="SMR" id="B8J561"/>
<dbReference type="KEGG" id="acp:A2cp1_1572"/>
<dbReference type="HOGENOM" id="CLU_066627_1_0_7"/>
<dbReference type="UniPathway" id="UPA00241">
    <property type="reaction ID" value="UER00352"/>
</dbReference>
<dbReference type="Proteomes" id="UP000007089">
    <property type="component" value="Chromosome"/>
</dbReference>
<dbReference type="GO" id="GO:0005737">
    <property type="term" value="C:cytoplasm"/>
    <property type="evidence" value="ECO:0007669"/>
    <property type="project" value="UniProtKB-SubCell"/>
</dbReference>
<dbReference type="GO" id="GO:0005524">
    <property type="term" value="F:ATP binding"/>
    <property type="evidence" value="ECO:0007669"/>
    <property type="project" value="UniProtKB-UniRule"/>
</dbReference>
<dbReference type="GO" id="GO:0046872">
    <property type="term" value="F:metal ion binding"/>
    <property type="evidence" value="ECO:0007669"/>
    <property type="project" value="UniProtKB-KW"/>
</dbReference>
<dbReference type="GO" id="GO:0004594">
    <property type="term" value="F:pantothenate kinase activity"/>
    <property type="evidence" value="ECO:0007669"/>
    <property type="project" value="UniProtKB-UniRule"/>
</dbReference>
<dbReference type="GO" id="GO:0015937">
    <property type="term" value="P:coenzyme A biosynthetic process"/>
    <property type="evidence" value="ECO:0007669"/>
    <property type="project" value="UniProtKB-UniRule"/>
</dbReference>
<dbReference type="CDD" id="cd24015">
    <property type="entry name" value="ASKHA_NBD_PanK-III"/>
    <property type="match status" value="1"/>
</dbReference>
<dbReference type="Gene3D" id="3.30.420.40">
    <property type="match status" value="2"/>
</dbReference>
<dbReference type="HAMAP" id="MF_01274">
    <property type="entry name" value="Pantothen_kinase_3"/>
    <property type="match status" value="1"/>
</dbReference>
<dbReference type="InterPro" id="IPR043129">
    <property type="entry name" value="ATPase_NBD"/>
</dbReference>
<dbReference type="InterPro" id="IPR004619">
    <property type="entry name" value="Type_III_PanK"/>
</dbReference>
<dbReference type="NCBIfam" id="TIGR00671">
    <property type="entry name" value="baf"/>
    <property type="match status" value="1"/>
</dbReference>
<dbReference type="NCBIfam" id="NF009848">
    <property type="entry name" value="PRK13318.1-6"/>
    <property type="match status" value="1"/>
</dbReference>
<dbReference type="NCBIfam" id="NF009855">
    <property type="entry name" value="PRK13321.1"/>
    <property type="match status" value="1"/>
</dbReference>
<dbReference type="PANTHER" id="PTHR34265">
    <property type="entry name" value="TYPE III PANTOTHENATE KINASE"/>
    <property type="match status" value="1"/>
</dbReference>
<dbReference type="PANTHER" id="PTHR34265:SF1">
    <property type="entry name" value="TYPE III PANTOTHENATE KINASE"/>
    <property type="match status" value="1"/>
</dbReference>
<dbReference type="Pfam" id="PF03309">
    <property type="entry name" value="Pan_kinase"/>
    <property type="match status" value="1"/>
</dbReference>
<dbReference type="SUPFAM" id="SSF53067">
    <property type="entry name" value="Actin-like ATPase domain"/>
    <property type="match status" value="2"/>
</dbReference>
<feature type="chain" id="PRO_1000165183" description="Type III pantothenate kinase">
    <location>
        <begin position="1"/>
        <end position="254"/>
    </location>
</feature>
<feature type="active site" description="Proton acceptor" evidence="1">
    <location>
        <position position="109"/>
    </location>
</feature>
<feature type="binding site" evidence="1">
    <location>
        <begin position="6"/>
        <end position="13"/>
    </location>
    <ligand>
        <name>ATP</name>
        <dbReference type="ChEBI" id="CHEBI:30616"/>
    </ligand>
</feature>
<feature type="binding site" evidence="1">
    <location>
        <position position="100"/>
    </location>
    <ligand>
        <name>substrate</name>
    </ligand>
</feature>
<feature type="binding site" evidence="1">
    <location>
        <begin position="107"/>
        <end position="110"/>
    </location>
    <ligand>
        <name>substrate</name>
    </ligand>
</feature>
<feature type="binding site" evidence="1">
    <location>
        <position position="129"/>
    </location>
    <ligand>
        <name>K(+)</name>
        <dbReference type="ChEBI" id="CHEBI:29103"/>
    </ligand>
</feature>
<feature type="binding site" evidence="1">
    <location>
        <position position="132"/>
    </location>
    <ligand>
        <name>ATP</name>
        <dbReference type="ChEBI" id="CHEBI:30616"/>
    </ligand>
</feature>
<feature type="binding site" evidence="1">
    <location>
        <position position="184"/>
    </location>
    <ligand>
        <name>substrate</name>
    </ligand>
</feature>
<proteinExistence type="inferred from homology"/>
<protein>
    <recommendedName>
        <fullName evidence="1">Type III pantothenate kinase</fullName>
        <ecNumber evidence="1">2.7.1.33</ecNumber>
    </recommendedName>
    <alternativeName>
        <fullName evidence="1">PanK-III</fullName>
    </alternativeName>
    <alternativeName>
        <fullName evidence="1">Pantothenic acid kinase</fullName>
    </alternativeName>
</protein>
<keyword id="KW-0067">ATP-binding</keyword>
<keyword id="KW-0173">Coenzyme A biosynthesis</keyword>
<keyword id="KW-0963">Cytoplasm</keyword>
<keyword id="KW-0418">Kinase</keyword>
<keyword id="KW-0479">Metal-binding</keyword>
<keyword id="KW-0547">Nucleotide-binding</keyword>
<keyword id="KW-0630">Potassium</keyword>
<keyword id="KW-0808">Transferase</keyword>
<gene>
    <name evidence="1" type="primary">coaX</name>
    <name type="ordered locus">A2cp1_1572</name>
</gene>
<evidence type="ECO:0000255" key="1">
    <source>
        <dbReference type="HAMAP-Rule" id="MF_01274"/>
    </source>
</evidence>
<reference key="1">
    <citation type="submission" date="2009-01" db="EMBL/GenBank/DDBJ databases">
        <title>Complete sequence of Anaeromyxobacter dehalogenans 2CP-1.</title>
        <authorList>
            <person name="Lucas S."/>
            <person name="Copeland A."/>
            <person name="Lapidus A."/>
            <person name="Glavina del Rio T."/>
            <person name="Dalin E."/>
            <person name="Tice H."/>
            <person name="Bruce D."/>
            <person name="Goodwin L."/>
            <person name="Pitluck S."/>
            <person name="Saunders E."/>
            <person name="Brettin T."/>
            <person name="Detter J.C."/>
            <person name="Han C."/>
            <person name="Larimer F."/>
            <person name="Land M."/>
            <person name="Hauser L."/>
            <person name="Kyrpides N."/>
            <person name="Ovchinnikova G."/>
            <person name="Beliaev A.S."/>
            <person name="Richardson P."/>
        </authorList>
    </citation>
    <scope>NUCLEOTIDE SEQUENCE [LARGE SCALE GENOMIC DNA]</scope>
    <source>
        <strain>2CP-1 / ATCC BAA-258</strain>
    </source>
</reference>
<accession>B8J561</accession>
<comment type="function">
    <text evidence="1">Catalyzes the phosphorylation of pantothenate (Pan), the first step in CoA biosynthesis.</text>
</comment>
<comment type="catalytic activity">
    <reaction evidence="1">
        <text>(R)-pantothenate + ATP = (R)-4'-phosphopantothenate + ADP + H(+)</text>
        <dbReference type="Rhea" id="RHEA:16373"/>
        <dbReference type="ChEBI" id="CHEBI:10986"/>
        <dbReference type="ChEBI" id="CHEBI:15378"/>
        <dbReference type="ChEBI" id="CHEBI:29032"/>
        <dbReference type="ChEBI" id="CHEBI:30616"/>
        <dbReference type="ChEBI" id="CHEBI:456216"/>
        <dbReference type="EC" id="2.7.1.33"/>
    </reaction>
</comment>
<comment type="cofactor">
    <cofactor evidence="1">
        <name>NH4(+)</name>
        <dbReference type="ChEBI" id="CHEBI:28938"/>
    </cofactor>
    <cofactor evidence="1">
        <name>K(+)</name>
        <dbReference type="ChEBI" id="CHEBI:29103"/>
    </cofactor>
    <text evidence="1">A monovalent cation. Ammonium or potassium.</text>
</comment>
<comment type="pathway">
    <text evidence="1">Cofactor biosynthesis; coenzyme A biosynthesis; CoA from (R)-pantothenate: step 1/5.</text>
</comment>
<comment type="subunit">
    <text evidence="1">Homodimer.</text>
</comment>
<comment type="subcellular location">
    <subcellularLocation>
        <location evidence="1">Cytoplasm</location>
    </subcellularLocation>
</comment>
<comment type="similarity">
    <text evidence="1">Belongs to the type III pantothenate kinase family.</text>
</comment>